<reference key="1">
    <citation type="submission" date="2007-11" db="EMBL/GenBank/DDBJ databases">
        <authorList>
            <consortium name="The Salmonella enterica serovar Arizonae Genome Sequencing Project"/>
            <person name="McClelland M."/>
            <person name="Sanderson E.K."/>
            <person name="Porwollik S."/>
            <person name="Spieth J."/>
            <person name="Clifton W.S."/>
            <person name="Fulton R."/>
            <person name="Chunyan W."/>
            <person name="Wollam A."/>
            <person name="Shah N."/>
            <person name="Pepin K."/>
            <person name="Bhonagiri V."/>
            <person name="Nash W."/>
            <person name="Johnson M."/>
            <person name="Thiruvilangam P."/>
            <person name="Wilson R."/>
        </authorList>
    </citation>
    <scope>NUCLEOTIDE SEQUENCE [LARGE SCALE GENOMIC DNA]</scope>
    <source>
        <strain>ATCC BAA-731 / CDC346-86 / RSK2980</strain>
    </source>
</reference>
<organism>
    <name type="scientific">Salmonella arizonae (strain ATCC BAA-731 / CDC346-86 / RSK2980)</name>
    <dbReference type="NCBI Taxonomy" id="41514"/>
    <lineage>
        <taxon>Bacteria</taxon>
        <taxon>Pseudomonadati</taxon>
        <taxon>Pseudomonadota</taxon>
        <taxon>Gammaproteobacteria</taxon>
        <taxon>Enterobacterales</taxon>
        <taxon>Enterobacteriaceae</taxon>
        <taxon>Salmonella</taxon>
    </lineage>
</organism>
<proteinExistence type="inferred from homology"/>
<evidence type="ECO:0000255" key="1">
    <source>
        <dbReference type="HAMAP-Rule" id="MF_01423"/>
    </source>
</evidence>
<comment type="subunit">
    <text evidence="1">Part of a tripartite efflux system composed of MdtA, MdtB and MdtC. MdtB forms a heteromultimer with MdtC.</text>
</comment>
<comment type="subcellular location">
    <subcellularLocation>
        <location evidence="1">Cell inner membrane</location>
        <topology evidence="1">Multi-pass membrane protein</topology>
    </subcellularLocation>
</comment>
<comment type="similarity">
    <text evidence="1">Belongs to the resistance-nodulation-cell division (RND) (TC 2.A.6) family. MdtB subfamily.</text>
</comment>
<protein>
    <recommendedName>
        <fullName evidence="1">Multidrug resistance protein MdtB</fullName>
    </recommendedName>
    <alternativeName>
        <fullName evidence="1">Multidrug transporter MdtB</fullName>
    </alternativeName>
</protein>
<feature type="chain" id="PRO_1000087414" description="Multidrug resistance protein MdtB">
    <location>
        <begin position="1"/>
        <end position="1040"/>
    </location>
</feature>
<feature type="transmembrane region" description="Helical" evidence="1">
    <location>
        <begin position="25"/>
        <end position="45"/>
    </location>
</feature>
<feature type="transmembrane region" description="Helical" evidence="1">
    <location>
        <begin position="347"/>
        <end position="367"/>
    </location>
</feature>
<feature type="transmembrane region" description="Helical" evidence="1">
    <location>
        <begin position="369"/>
        <end position="389"/>
    </location>
</feature>
<feature type="transmembrane region" description="Helical" evidence="1">
    <location>
        <begin position="396"/>
        <end position="416"/>
    </location>
</feature>
<feature type="transmembrane region" description="Helical" evidence="1">
    <location>
        <begin position="440"/>
        <end position="460"/>
    </location>
</feature>
<feature type="transmembrane region" description="Helical" evidence="1">
    <location>
        <begin position="472"/>
        <end position="492"/>
    </location>
</feature>
<feature type="transmembrane region" description="Helical" evidence="1">
    <location>
        <begin position="537"/>
        <end position="557"/>
    </location>
</feature>
<feature type="transmembrane region" description="Helical" evidence="1">
    <location>
        <begin position="869"/>
        <end position="889"/>
    </location>
</feature>
<feature type="transmembrane region" description="Helical" evidence="1">
    <location>
        <begin position="890"/>
        <end position="910"/>
    </location>
</feature>
<feature type="transmembrane region" description="Helical" evidence="1">
    <location>
        <begin position="911"/>
        <end position="931"/>
    </location>
</feature>
<feature type="transmembrane region" description="Helical" evidence="1">
    <location>
        <begin position="968"/>
        <end position="988"/>
    </location>
</feature>
<feature type="transmembrane region" description="Helical" evidence="1">
    <location>
        <begin position="998"/>
        <end position="1018"/>
    </location>
</feature>
<accession>A9MKX0</accession>
<keyword id="KW-0997">Cell inner membrane</keyword>
<keyword id="KW-1003">Cell membrane</keyword>
<keyword id="KW-0472">Membrane</keyword>
<keyword id="KW-1185">Reference proteome</keyword>
<keyword id="KW-0812">Transmembrane</keyword>
<keyword id="KW-1133">Transmembrane helix</keyword>
<keyword id="KW-0813">Transport</keyword>
<sequence>MQVLPPGSTGGPSRLFILRPVATTLLMAAMLLAGIIGYRFLPVAALPEVDYPTIQVVTLYPGASPDVMTSAVTAPLERQFGQMSGLKQMSSQSSGGASVVTLQFQLTLPLDVAEQEVQAAINAATNLLPSDLPNPPIYSKVNPADPPIMTLAVTSNAVPMTQVEGMVETRVAQKISQVSGVGLVTLAGGQRPAVRVKLNAQAIAALGLTSETIRTAITGANVNSAKGSLDGPERAVTLSANDQMQSADEYRRLIIAYKNGAPVRLGDVATVEQGAENSWLGAWANKAPAIVMNVQRQPGANIIATADSIRQMLPQLTESLPKSVKVTVLSDRTTNIRASVRDTQFELMLAIALVVMIIYLFLRNIPATIIPGVAVPLSLIGTFAVMVFLDFSINNLTLMALTIATGFVVDDAIVVIENISRYIEKGEKPLAAALKGAGEIGFTIISLTFSLIAVLIPLLFMGDIVGRLFREFAVTLAVAILISAVVSLTLTPMMCARMLSQQSLRKQNRFSRACERLFDRVIASYGRGLAKVLNHPWLTLSVAFATLLLSVMLWIVIPKGFFPVQDNGIIQGTLQAPQSSSYASMAQRQHQVAERILQDPAVQSLTTFVGVDGANPTLNSARLQINLKSLDERDDRVQQVISRLQTAVATIPGVALYLQPTQDLTIDTQVSRTQYQFTLRATTLDALSHWAPKLLNALQSLPQLSEVSSDWQDRGLAAWVNVDRDSASRLGISMADVDNALYNAFGQRLISTIYTQANQYRVVLEHNTANKPGLAALETIRLTGNDGGTIPLSAIASIKQRFTPLSINHLDQFPVTTFSFNVPEGYSLGDAVQAILNTERTLALPADITTQFQGSTLAFQAALGNTVWLIVAAVVAMYIVLGVLYESFIHPITILSTLPTAGVGALLALMIAGSELDIIAIIGIILLIGIVKKNAIMMIDFALAAEREQGMYPRDAIFQACLLRFRPILMTTLAALLGALPLMLSTGVGAELRRPLGIAMVGGLLVSQILTLFTTPVIYLLFDRLSLYVKSRFPRHKEEA</sequence>
<gene>
    <name evidence="1" type="primary">mdtB</name>
    <name type="ordered locus">SARI_00765</name>
</gene>
<dbReference type="EMBL" id="CP000880">
    <property type="protein sequence ID" value="ABX20686.1"/>
    <property type="molecule type" value="Genomic_DNA"/>
</dbReference>
<dbReference type="SMR" id="A9MKX0"/>
<dbReference type="STRING" id="41514.SARI_00765"/>
<dbReference type="KEGG" id="ses:SARI_00765"/>
<dbReference type="HOGENOM" id="CLU_002755_1_2_6"/>
<dbReference type="Proteomes" id="UP000002084">
    <property type="component" value="Chromosome"/>
</dbReference>
<dbReference type="GO" id="GO:0005886">
    <property type="term" value="C:plasma membrane"/>
    <property type="evidence" value="ECO:0007669"/>
    <property type="project" value="UniProtKB-SubCell"/>
</dbReference>
<dbReference type="GO" id="GO:0042910">
    <property type="term" value="F:xenobiotic transmembrane transporter activity"/>
    <property type="evidence" value="ECO:0007669"/>
    <property type="project" value="TreeGrafter"/>
</dbReference>
<dbReference type="FunFam" id="1.20.1640.10:FF:000001">
    <property type="entry name" value="Efflux pump membrane transporter"/>
    <property type="match status" value="1"/>
</dbReference>
<dbReference type="FunFam" id="3.30.70.1430:FF:000001">
    <property type="entry name" value="Efflux pump membrane transporter"/>
    <property type="match status" value="1"/>
</dbReference>
<dbReference type="FunFam" id="3.30.2090.10:FF:000003">
    <property type="entry name" value="Multidrug resistance protein MdtB"/>
    <property type="match status" value="1"/>
</dbReference>
<dbReference type="Gene3D" id="3.30.70.1430">
    <property type="entry name" value="Multidrug efflux transporter AcrB pore domain"/>
    <property type="match status" value="2"/>
</dbReference>
<dbReference type="Gene3D" id="3.30.70.1440">
    <property type="entry name" value="Multidrug efflux transporter AcrB pore domain"/>
    <property type="match status" value="1"/>
</dbReference>
<dbReference type="Gene3D" id="3.30.70.1320">
    <property type="entry name" value="Multidrug efflux transporter AcrB pore domain like"/>
    <property type="match status" value="1"/>
</dbReference>
<dbReference type="Gene3D" id="3.30.2090.10">
    <property type="entry name" value="Multidrug efflux transporter AcrB TolC docking domain, DN and DC subdomains"/>
    <property type="match status" value="2"/>
</dbReference>
<dbReference type="Gene3D" id="1.20.1640.10">
    <property type="entry name" value="Multidrug efflux transporter AcrB transmembrane domain"/>
    <property type="match status" value="2"/>
</dbReference>
<dbReference type="HAMAP" id="MF_01423">
    <property type="entry name" value="MdtB"/>
    <property type="match status" value="1"/>
</dbReference>
<dbReference type="InterPro" id="IPR027463">
    <property type="entry name" value="AcrB_DN_DC_subdom"/>
</dbReference>
<dbReference type="InterPro" id="IPR001036">
    <property type="entry name" value="Acrflvin-R"/>
</dbReference>
<dbReference type="InterPro" id="IPR022831">
    <property type="entry name" value="Multidrug-R_MdtB"/>
</dbReference>
<dbReference type="NCBIfam" id="NF007798">
    <property type="entry name" value="PRK10503.1"/>
    <property type="match status" value="1"/>
</dbReference>
<dbReference type="NCBIfam" id="NF033617">
    <property type="entry name" value="RND_permease_2"/>
    <property type="match status" value="1"/>
</dbReference>
<dbReference type="PANTHER" id="PTHR32063">
    <property type="match status" value="1"/>
</dbReference>
<dbReference type="PANTHER" id="PTHR32063:SF21">
    <property type="entry name" value="MULTIDRUG RESISTANCE PROTEIN MDTB"/>
    <property type="match status" value="1"/>
</dbReference>
<dbReference type="Pfam" id="PF00873">
    <property type="entry name" value="ACR_tran"/>
    <property type="match status" value="1"/>
</dbReference>
<dbReference type="PRINTS" id="PR00702">
    <property type="entry name" value="ACRIFLAVINRP"/>
</dbReference>
<dbReference type="SUPFAM" id="SSF82693">
    <property type="entry name" value="Multidrug efflux transporter AcrB pore domain, PN1, PN2, PC1 and PC2 subdomains"/>
    <property type="match status" value="3"/>
</dbReference>
<dbReference type="SUPFAM" id="SSF82714">
    <property type="entry name" value="Multidrug efflux transporter AcrB TolC docking domain, DN and DC subdomains"/>
    <property type="match status" value="2"/>
</dbReference>
<dbReference type="SUPFAM" id="SSF82866">
    <property type="entry name" value="Multidrug efflux transporter AcrB transmembrane domain"/>
    <property type="match status" value="2"/>
</dbReference>
<name>MDTB_SALAR</name>